<sequence>MSTQLRAAEISDIIESRIEKFGIKAEERTEGTILNIKDGIVRVYGLRDVMFGEMVEFPENTYGLAFNLERDSVGAVVMGPYEHLEEGMTARCTGRILEVPVGEALLGRVVDGLGKPIDGKGPIDTSETSPIEKVAPGVITRKSVDTSLPTGLKSIDAMVPIGRGQRELIIGDRQTGKTAIAIDTIINQKHTGVKCIYVAIGQKQSSVAAVVRKLEEHGAMEHTIVVNASASEAAALQYLAPYAGCTMGEYFRDRGQDALIVYDDLTKQAWAYRQISLLLRRPPGREAYPGDIFYLHSRLLERAAHVNEAYVKEFTKGKVTGKTGSLTALPIIETQAGDVSAFIPTNVISITDGQIYLDVNLFNAGIRPAINAGLSVSRVGGAAQTKIIKKLIGGLRIALAQYRELEAFSQFASDLDEATRKQLEHGQRVMEILKQPQYQPLSVGEMAIIWYVVNNNYLDQVELKKVVDFERSLLSFLRDQHQDLLDEINKNPNYSEKIIEKIKAVVEEFVKTQSY</sequence>
<name>ATPA_COXBR</name>
<protein>
    <recommendedName>
        <fullName evidence="1">ATP synthase subunit alpha</fullName>
        <ecNumber evidence="1">7.1.2.2</ecNumber>
    </recommendedName>
    <alternativeName>
        <fullName evidence="1">ATP synthase F1 sector subunit alpha</fullName>
    </alternativeName>
    <alternativeName>
        <fullName evidence="1">F-ATPase subunit alpha</fullName>
    </alternativeName>
</protein>
<comment type="function">
    <text evidence="1">Produces ATP from ADP in the presence of a proton gradient across the membrane. The alpha chain is a regulatory subunit.</text>
</comment>
<comment type="catalytic activity">
    <reaction evidence="1">
        <text>ATP + H2O + 4 H(+)(in) = ADP + phosphate + 5 H(+)(out)</text>
        <dbReference type="Rhea" id="RHEA:57720"/>
        <dbReference type="ChEBI" id="CHEBI:15377"/>
        <dbReference type="ChEBI" id="CHEBI:15378"/>
        <dbReference type="ChEBI" id="CHEBI:30616"/>
        <dbReference type="ChEBI" id="CHEBI:43474"/>
        <dbReference type="ChEBI" id="CHEBI:456216"/>
        <dbReference type="EC" id="7.1.2.2"/>
    </reaction>
</comment>
<comment type="subunit">
    <text evidence="1">F-type ATPases have 2 components, CF(1) - the catalytic core - and CF(0) - the membrane proton channel. CF(1) has five subunits: alpha(3), beta(3), gamma(1), delta(1), epsilon(1). CF(0) has three main subunits: a(1), b(2) and c(9-12). The alpha and beta chains form an alternating ring which encloses part of the gamma chain. CF(1) is attached to CF(0) by a central stalk formed by the gamma and epsilon chains, while a peripheral stalk is formed by the delta and b chains.</text>
</comment>
<comment type="subcellular location">
    <subcellularLocation>
        <location evidence="1">Cell inner membrane</location>
        <topology evidence="1">Peripheral membrane protein</topology>
    </subcellularLocation>
</comment>
<comment type="similarity">
    <text evidence="1">Belongs to the ATPase alpha/beta chains family.</text>
</comment>
<proteinExistence type="inferred from homology"/>
<reference key="1">
    <citation type="submission" date="2007-11" db="EMBL/GenBank/DDBJ databases">
        <title>Genome sequencing of phylogenetically and phenotypically diverse Coxiella burnetii isolates.</title>
        <authorList>
            <person name="Seshadri R."/>
            <person name="Samuel J.E."/>
        </authorList>
    </citation>
    <scope>NUCLEOTIDE SEQUENCE [LARGE SCALE GENOMIC DNA]</scope>
    <source>
        <strain>RSA 331 / Henzerling II</strain>
    </source>
</reference>
<dbReference type="EC" id="7.1.2.2" evidence="1"/>
<dbReference type="EMBL" id="CP000890">
    <property type="protein sequence ID" value="ABX78626.1"/>
    <property type="molecule type" value="Genomic_DNA"/>
</dbReference>
<dbReference type="RefSeq" id="WP_005770035.1">
    <property type="nucleotide sequence ID" value="NC_010117.1"/>
</dbReference>
<dbReference type="SMR" id="A9NBC8"/>
<dbReference type="KEGG" id="cbs:COXBURSA331_A2146"/>
<dbReference type="HOGENOM" id="CLU_010091_2_1_6"/>
<dbReference type="GO" id="GO:0005886">
    <property type="term" value="C:plasma membrane"/>
    <property type="evidence" value="ECO:0007669"/>
    <property type="project" value="UniProtKB-SubCell"/>
</dbReference>
<dbReference type="GO" id="GO:0045259">
    <property type="term" value="C:proton-transporting ATP synthase complex"/>
    <property type="evidence" value="ECO:0007669"/>
    <property type="project" value="UniProtKB-KW"/>
</dbReference>
<dbReference type="GO" id="GO:0043531">
    <property type="term" value="F:ADP binding"/>
    <property type="evidence" value="ECO:0007669"/>
    <property type="project" value="TreeGrafter"/>
</dbReference>
<dbReference type="GO" id="GO:0005524">
    <property type="term" value="F:ATP binding"/>
    <property type="evidence" value="ECO:0007669"/>
    <property type="project" value="UniProtKB-UniRule"/>
</dbReference>
<dbReference type="GO" id="GO:0046933">
    <property type="term" value="F:proton-transporting ATP synthase activity, rotational mechanism"/>
    <property type="evidence" value="ECO:0007669"/>
    <property type="project" value="UniProtKB-UniRule"/>
</dbReference>
<dbReference type="CDD" id="cd18113">
    <property type="entry name" value="ATP-synt_F1_alpha_C"/>
    <property type="match status" value="1"/>
</dbReference>
<dbReference type="CDD" id="cd18116">
    <property type="entry name" value="ATP-synt_F1_alpha_N"/>
    <property type="match status" value="1"/>
</dbReference>
<dbReference type="CDD" id="cd01132">
    <property type="entry name" value="F1-ATPase_alpha_CD"/>
    <property type="match status" value="1"/>
</dbReference>
<dbReference type="FunFam" id="1.20.150.20:FF:000001">
    <property type="entry name" value="ATP synthase subunit alpha"/>
    <property type="match status" value="1"/>
</dbReference>
<dbReference type="FunFam" id="2.40.30.20:FF:000001">
    <property type="entry name" value="ATP synthase subunit alpha"/>
    <property type="match status" value="1"/>
</dbReference>
<dbReference type="FunFam" id="3.40.50.300:FF:000002">
    <property type="entry name" value="ATP synthase subunit alpha"/>
    <property type="match status" value="1"/>
</dbReference>
<dbReference type="Gene3D" id="2.40.30.20">
    <property type="match status" value="1"/>
</dbReference>
<dbReference type="Gene3D" id="1.20.150.20">
    <property type="entry name" value="ATP synthase alpha/beta chain, C-terminal domain"/>
    <property type="match status" value="1"/>
</dbReference>
<dbReference type="Gene3D" id="3.40.50.300">
    <property type="entry name" value="P-loop containing nucleotide triphosphate hydrolases"/>
    <property type="match status" value="1"/>
</dbReference>
<dbReference type="HAMAP" id="MF_01346">
    <property type="entry name" value="ATP_synth_alpha_bact"/>
    <property type="match status" value="1"/>
</dbReference>
<dbReference type="InterPro" id="IPR023366">
    <property type="entry name" value="ATP_synth_asu-like_sf"/>
</dbReference>
<dbReference type="InterPro" id="IPR000793">
    <property type="entry name" value="ATP_synth_asu_C"/>
</dbReference>
<dbReference type="InterPro" id="IPR038376">
    <property type="entry name" value="ATP_synth_asu_C_sf"/>
</dbReference>
<dbReference type="InterPro" id="IPR033732">
    <property type="entry name" value="ATP_synth_F1_a_nt-bd_dom"/>
</dbReference>
<dbReference type="InterPro" id="IPR005294">
    <property type="entry name" value="ATP_synth_F1_asu"/>
</dbReference>
<dbReference type="InterPro" id="IPR020003">
    <property type="entry name" value="ATPase_a/bsu_AS"/>
</dbReference>
<dbReference type="InterPro" id="IPR004100">
    <property type="entry name" value="ATPase_F1/V1/A1_a/bsu_N"/>
</dbReference>
<dbReference type="InterPro" id="IPR036121">
    <property type="entry name" value="ATPase_F1/V1/A1_a/bsu_N_sf"/>
</dbReference>
<dbReference type="InterPro" id="IPR000194">
    <property type="entry name" value="ATPase_F1/V1/A1_a/bsu_nucl-bd"/>
</dbReference>
<dbReference type="InterPro" id="IPR027417">
    <property type="entry name" value="P-loop_NTPase"/>
</dbReference>
<dbReference type="NCBIfam" id="TIGR00962">
    <property type="entry name" value="atpA"/>
    <property type="match status" value="1"/>
</dbReference>
<dbReference type="NCBIfam" id="NF009884">
    <property type="entry name" value="PRK13343.1"/>
    <property type="match status" value="1"/>
</dbReference>
<dbReference type="PANTHER" id="PTHR48082">
    <property type="entry name" value="ATP SYNTHASE SUBUNIT ALPHA, MITOCHONDRIAL"/>
    <property type="match status" value="1"/>
</dbReference>
<dbReference type="PANTHER" id="PTHR48082:SF2">
    <property type="entry name" value="ATP SYNTHASE SUBUNIT ALPHA, MITOCHONDRIAL"/>
    <property type="match status" value="1"/>
</dbReference>
<dbReference type="Pfam" id="PF00006">
    <property type="entry name" value="ATP-synt_ab"/>
    <property type="match status" value="1"/>
</dbReference>
<dbReference type="Pfam" id="PF00306">
    <property type="entry name" value="ATP-synt_ab_C"/>
    <property type="match status" value="1"/>
</dbReference>
<dbReference type="Pfam" id="PF02874">
    <property type="entry name" value="ATP-synt_ab_N"/>
    <property type="match status" value="1"/>
</dbReference>
<dbReference type="PIRSF" id="PIRSF039088">
    <property type="entry name" value="F_ATPase_subunit_alpha"/>
    <property type="match status" value="1"/>
</dbReference>
<dbReference type="SUPFAM" id="SSF47917">
    <property type="entry name" value="C-terminal domain of alpha and beta subunits of F1 ATP synthase"/>
    <property type="match status" value="1"/>
</dbReference>
<dbReference type="SUPFAM" id="SSF50615">
    <property type="entry name" value="N-terminal domain of alpha and beta subunits of F1 ATP synthase"/>
    <property type="match status" value="1"/>
</dbReference>
<dbReference type="SUPFAM" id="SSF52540">
    <property type="entry name" value="P-loop containing nucleoside triphosphate hydrolases"/>
    <property type="match status" value="1"/>
</dbReference>
<dbReference type="PROSITE" id="PS00152">
    <property type="entry name" value="ATPASE_ALPHA_BETA"/>
    <property type="match status" value="1"/>
</dbReference>
<organism>
    <name type="scientific">Coxiella burnetii (strain RSA 331 / Henzerling II)</name>
    <dbReference type="NCBI Taxonomy" id="360115"/>
    <lineage>
        <taxon>Bacteria</taxon>
        <taxon>Pseudomonadati</taxon>
        <taxon>Pseudomonadota</taxon>
        <taxon>Gammaproteobacteria</taxon>
        <taxon>Legionellales</taxon>
        <taxon>Coxiellaceae</taxon>
        <taxon>Coxiella</taxon>
    </lineage>
</organism>
<evidence type="ECO:0000255" key="1">
    <source>
        <dbReference type="HAMAP-Rule" id="MF_01346"/>
    </source>
</evidence>
<gene>
    <name evidence="1" type="primary">atpA</name>
    <name type="ordered locus">COXBURSA331_A2146</name>
</gene>
<feature type="chain" id="PRO_1000086874" description="ATP synthase subunit alpha">
    <location>
        <begin position="1"/>
        <end position="515"/>
    </location>
</feature>
<feature type="binding site" evidence="1">
    <location>
        <begin position="171"/>
        <end position="178"/>
    </location>
    <ligand>
        <name>ATP</name>
        <dbReference type="ChEBI" id="CHEBI:30616"/>
    </ligand>
</feature>
<feature type="site" description="Required for activity" evidence="1">
    <location>
        <position position="375"/>
    </location>
</feature>
<accession>A9NBC8</accession>
<keyword id="KW-0066">ATP synthesis</keyword>
<keyword id="KW-0067">ATP-binding</keyword>
<keyword id="KW-0997">Cell inner membrane</keyword>
<keyword id="KW-1003">Cell membrane</keyword>
<keyword id="KW-0139">CF(1)</keyword>
<keyword id="KW-0375">Hydrogen ion transport</keyword>
<keyword id="KW-0406">Ion transport</keyword>
<keyword id="KW-0472">Membrane</keyword>
<keyword id="KW-0547">Nucleotide-binding</keyword>
<keyword id="KW-1278">Translocase</keyword>
<keyword id="KW-0813">Transport</keyword>